<gene>
    <name evidence="1" type="primary">mutS2</name>
    <name evidence="1" type="synonym">rqcU</name>
    <name type="ordered locus">Sca_0762</name>
</gene>
<keyword id="KW-0067">ATP-binding</keyword>
<keyword id="KW-0238">DNA-binding</keyword>
<keyword id="KW-0255">Endonuclease</keyword>
<keyword id="KW-0378">Hydrolase</keyword>
<keyword id="KW-0540">Nuclease</keyword>
<keyword id="KW-0547">Nucleotide-binding</keyword>
<keyword id="KW-1185">Reference proteome</keyword>
<keyword id="KW-0694">RNA-binding</keyword>
<keyword id="KW-0699">rRNA-binding</keyword>
<name>MUTS2_STACT</name>
<dbReference type="EC" id="3.1.-.-" evidence="1"/>
<dbReference type="EC" id="3.6.4.-" evidence="1"/>
<dbReference type="EMBL" id="AM295250">
    <property type="protein sequence ID" value="CAL27672.1"/>
    <property type="molecule type" value="Genomic_DNA"/>
</dbReference>
<dbReference type="RefSeq" id="WP_015900014.1">
    <property type="nucleotide sequence ID" value="NC_012121.1"/>
</dbReference>
<dbReference type="SMR" id="B9DPU2"/>
<dbReference type="GeneID" id="93795699"/>
<dbReference type="KEGG" id="sca:SCA_0762"/>
<dbReference type="eggNOG" id="COG1193">
    <property type="taxonomic scope" value="Bacteria"/>
</dbReference>
<dbReference type="HOGENOM" id="CLU_011252_2_1_9"/>
<dbReference type="OrthoDB" id="9808166at2"/>
<dbReference type="BioCyc" id="SCAR396513:SCA_RS03860-MONOMER"/>
<dbReference type="Proteomes" id="UP000000444">
    <property type="component" value="Chromosome"/>
</dbReference>
<dbReference type="GO" id="GO:0005524">
    <property type="term" value="F:ATP binding"/>
    <property type="evidence" value="ECO:0007669"/>
    <property type="project" value="UniProtKB-UniRule"/>
</dbReference>
<dbReference type="GO" id="GO:0016887">
    <property type="term" value="F:ATP hydrolysis activity"/>
    <property type="evidence" value="ECO:0007669"/>
    <property type="project" value="InterPro"/>
</dbReference>
<dbReference type="GO" id="GO:0140664">
    <property type="term" value="F:ATP-dependent DNA damage sensor activity"/>
    <property type="evidence" value="ECO:0007669"/>
    <property type="project" value="InterPro"/>
</dbReference>
<dbReference type="GO" id="GO:0004519">
    <property type="term" value="F:endonuclease activity"/>
    <property type="evidence" value="ECO:0007669"/>
    <property type="project" value="UniProtKB-UniRule"/>
</dbReference>
<dbReference type="GO" id="GO:0030983">
    <property type="term" value="F:mismatched DNA binding"/>
    <property type="evidence" value="ECO:0007669"/>
    <property type="project" value="InterPro"/>
</dbReference>
<dbReference type="GO" id="GO:0043023">
    <property type="term" value="F:ribosomal large subunit binding"/>
    <property type="evidence" value="ECO:0007669"/>
    <property type="project" value="UniProtKB-UniRule"/>
</dbReference>
<dbReference type="GO" id="GO:0019843">
    <property type="term" value="F:rRNA binding"/>
    <property type="evidence" value="ECO:0007669"/>
    <property type="project" value="UniProtKB-UniRule"/>
</dbReference>
<dbReference type="GO" id="GO:0006298">
    <property type="term" value="P:mismatch repair"/>
    <property type="evidence" value="ECO:0007669"/>
    <property type="project" value="InterPro"/>
</dbReference>
<dbReference type="GO" id="GO:0045910">
    <property type="term" value="P:negative regulation of DNA recombination"/>
    <property type="evidence" value="ECO:0007669"/>
    <property type="project" value="InterPro"/>
</dbReference>
<dbReference type="GO" id="GO:0072344">
    <property type="term" value="P:rescue of stalled ribosome"/>
    <property type="evidence" value="ECO:0007669"/>
    <property type="project" value="UniProtKB-UniRule"/>
</dbReference>
<dbReference type="CDD" id="cd03280">
    <property type="entry name" value="ABC_MutS2"/>
    <property type="match status" value="1"/>
</dbReference>
<dbReference type="FunFam" id="3.40.50.300:FF:000830">
    <property type="entry name" value="Endonuclease MutS2"/>
    <property type="match status" value="1"/>
</dbReference>
<dbReference type="Gene3D" id="3.30.1370.110">
    <property type="match status" value="1"/>
</dbReference>
<dbReference type="Gene3D" id="3.40.50.300">
    <property type="entry name" value="P-loop containing nucleotide triphosphate hydrolases"/>
    <property type="match status" value="1"/>
</dbReference>
<dbReference type="HAMAP" id="MF_00092">
    <property type="entry name" value="MutS2"/>
    <property type="match status" value="1"/>
</dbReference>
<dbReference type="InterPro" id="IPR000432">
    <property type="entry name" value="DNA_mismatch_repair_MutS_C"/>
</dbReference>
<dbReference type="InterPro" id="IPR007696">
    <property type="entry name" value="DNA_mismatch_repair_MutS_core"/>
</dbReference>
<dbReference type="InterPro" id="IPR036187">
    <property type="entry name" value="DNA_mismatch_repair_MutS_sf"/>
</dbReference>
<dbReference type="InterPro" id="IPR046893">
    <property type="entry name" value="MSSS"/>
</dbReference>
<dbReference type="InterPro" id="IPR045076">
    <property type="entry name" value="MutS"/>
</dbReference>
<dbReference type="InterPro" id="IPR005747">
    <property type="entry name" value="MutS2"/>
</dbReference>
<dbReference type="InterPro" id="IPR027417">
    <property type="entry name" value="P-loop_NTPase"/>
</dbReference>
<dbReference type="InterPro" id="IPR002625">
    <property type="entry name" value="Smr_dom"/>
</dbReference>
<dbReference type="InterPro" id="IPR036063">
    <property type="entry name" value="Smr_dom_sf"/>
</dbReference>
<dbReference type="NCBIfam" id="TIGR01069">
    <property type="entry name" value="mutS2"/>
    <property type="match status" value="1"/>
</dbReference>
<dbReference type="PANTHER" id="PTHR48466:SF2">
    <property type="entry name" value="OS10G0509000 PROTEIN"/>
    <property type="match status" value="1"/>
</dbReference>
<dbReference type="PANTHER" id="PTHR48466">
    <property type="entry name" value="OS10G0509000 PROTEIN-RELATED"/>
    <property type="match status" value="1"/>
</dbReference>
<dbReference type="Pfam" id="PF20297">
    <property type="entry name" value="MSSS"/>
    <property type="match status" value="1"/>
</dbReference>
<dbReference type="Pfam" id="PF00488">
    <property type="entry name" value="MutS_V"/>
    <property type="match status" value="1"/>
</dbReference>
<dbReference type="Pfam" id="PF01713">
    <property type="entry name" value="Smr"/>
    <property type="match status" value="1"/>
</dbReference>
<dbReference type="PIRSF" id="PIRSF005814">
    <property type="entry name" value="MutS_YshD"/>
    <property type="match status" value="1"/>
</dbReference>
<dbReference type="SMART" id="SM00534">
    <property type="entry name" value="MUTSac"/>
    <property type="match status" value="1"/>
</dbReference>
<dbReference type="SMART" id="SM00533">
    <property type="entry name" value="MUTSd"/>
    <property type="match status" value="1"/>
</dbReference>
<dbReference type="SMART" id="SM00463">
    <property type="entry name" value="SMR"/>
    <property type="match status" value="1"/>
</dbReference>
<dbReference type="SUPFAM" id="SSF48334">
    <property type="entry name" value="DNA repair protein MutS, domain III"/>
    <property type="match status" value="1"/>
</dbReference>
<dbReference type="SUPFAM" id="SSF52540">
    <property type="entry name" value="P-loop containing nucleoside triphosphate hydrolases"/>
    <property type="match status" value="1"/>
</dbReference>
<dbReference type="SUPFAM" id="SSF160443">
    <property type="entry name" value="SMR domain-like"/>
    <property type="match status" value="1"/>
</dbReference>
<dbReference type="PROSITE" id="PS00486">
    <property type="entry name" value="DNA_MISMATCH_REPAIR_2"/>
    <property type="match status" value="1"/>
</dbReference>
<dbReference type="PROSITE" id="PS50828">
    <property type="entry name" value="SMR"/>
    <property type="match status" value="1"/>
</dbReference>
<comment type="function">
    <text evidence="1">Endonuclease that is involved in the suppression of homologous recombination and thus may have a key role in the control of bacterial genetic diversity.</text>
</comment>
<comment type="function">
    <text evidence="1">Acts as a ribosome collision sensor, splitting the ribosome into its 2 subunits. Detects stalled/collided 70S ribosomes which it binds and splits by an ATP-hydrolysis driven conformational change. Acts upstream of the ribosome quality control system (RQC), a ribosome-associated complex that mediates the extraction of incompletely synthesized nascent chains from stalled ribosomes and their subsequent degradation. Probably generates substrates for RQC.</text>
</comment>
<comment type="subunit">
    <text evidence="1">Homodimer. Binds to stalled ribosomes, contacting rRNA.</text>
</comment>
<comment type="similarity">
    <text evidence="1">Belongs to the DNA mismatch repair MutS family. MutS2 subfamily.</text>
</comment>
<reference key="1">
    <citation type="journal article" date="2009" name="Appl. Environ. Microbiol.">
        <title>Genome analysis of the meat starter culture bacterium Staphylococcus carnosus TM300.</title>
        <authorList>
            <person name="Rosenstein R."/>
            <person name="Nerz C."/>
            <person name="Biswas L."/>
            <person name="Resch A."/>
            <person name="Raddatz G."/>
            <person name="Schuster S.C."/>
            <person name="Goetz F."/>
        </authorList>
    </citation>
    <scope>NUCLEOTIDE SEQUENCE [LARGE SCALE GENOMIC DNA]</scope>
    <source>
        <strain>TM300</strain>
    </source>
</reference>
<proteinExistence type="inferred from homology"/>
<feature type="chain" id="PRO_1000118565" description="Endonuclease MutS2">
    <location>
        <begin position="1"/>
        <end position="782"/>
    </location>
</feature>
<feature type="domain" description="Smr" evidence="1">
    <location>
        <begin position="707"/>
        <end position="782"/>
    </location>
</feature>
<feature type="binding site" evidence="1">
    <location>
        <begin position="336"/>
        <end position="343"/>
    </location>
    <ligand>
        <name>ATP</name>
        <dbReference type="ChEBI" id="CHEBI:30616"/>
    </ligand>
</feature>
<protein>
    <recommendedName>
        <fullName evidence="1">Endonuclease MutS2</fullName>
        <ecNumber evidence="1">3.1.-.-</ecNumber>
    </recommendedName>
    <alternativeName>
        <fullName evidence="1">Ribosome-associated protein quality control-upstream factor</fullName>
        <shortName evidence="1">RQC-upstream factor</shortName>
        <shortName evidence="1">RqcU</shortName>
        <ecNumber evidence="1">3.6.4.-</ecNumber>
    </alternativeName>
</protein>
<organism>
    <name type="scientific">Staphylococcus carnosus (strain TM300)</name>
    <dbReference type="NCBI Taxonomy" id="396513"/>
    <lineage>
        <taxon>Bacteria</taxon>
        <taxon>Bacillati</taxon>
        <taxon>Bacillota</taxon>
        <taxon>Bacilli</taxon>
        <taxon>Bacillales</taxon>
        <taxon>Staphylococcaceae</taxon>
        <taxon>Staphylococcus</taxon>
    </lineage>
</organism>
<evidence type="ECO:0000255" key="1">
    <source>
        <dbReference type="HAMAP-Rule" id="MF_00092"/>
    </source>
</evidence>
<accession>B9DPU2</accession>
<sequence length="782" mass="88129">MRQKTLDVLDFDKIKAQVENEAVSDLGRVKAAAMTPASDYETVVFQMNETDELSQIYNKHRLPSLSGLTEVKPLIHRAKIGSILNVRELNQIKRLIQVQNQYKTFYSQLLEEEEAINYPILDERMAQLPILTDLYQEIHQKCDAYDLFDDASHELQSIRSRIHSTSQRIKQNLDRIVKSQSNQKKLSDAIITVRNDRHVIPVKAEYRQDFNGIVHDQSSSGQTLYIEPSAVVEMNNKISRLRNDEKVEVERILSVLSGEVAAEADACLIAESVMGQIDFLTAKARYGQSIKGTKPEFTEERNVYLPKAFHPLLDRATVVANTIEFAEDIQTVIITGPNTGGKTVTLKTLGLIIVMAQSGLLIPALDGSKLSVFDNVYCDIGDEQSIEQSLSTFSSHMKNIVEILKHADHNSLILFDELGAGTDPSEGAALAMSILDHVQKLGSLVMATTHYPELKAYSYNREGVMNASVEFDVNILSPTYKLLMGVPGRSNAFEISSKLGLSGNIIREAKSLIGQDEQEINNMIASLETNAKKVEDQRIELDRLLREAKQVHGDLNKKYEQYQNYEKQLMDDAKVKANQRVKAATKEADDIIKDLRHMRDEKNAEVKEHELIEKRKHLDEQYEGTDIKQNVKKQKWDEIQAGDEVKVLTYGQKGEVLEILDDDEAVVQMGIIKMKLPIADLEKKKKAQEKPAKTVSRTNRSAVKMELDLRGYRYEEAITALDQYLDQAMLSNYENVYIIHGKGTGALQKAVQQHLKKHKNVASFRTGMPSEGGFGVTVAELK</sequence>